<name>HLD_STAAR</name>
<evidence type="ECO:0000250" key="1"/>
<evidence type="ECO:0000305" key="2"/>
<gene>
    <name type="primary">hld</name>
    <name type="ordered locus">SAR2122</name>
</gene>
<comment type="function">
    <text evidence="1">Lyses erythrocytes and many other mammalian cells.</text>
</comment>
<comment type="subcellular location">
    <subcellularLocation>
        <location evidence="1">Secreted</location>
    </subcellularLocation>
    <subcellularLocation>
        <location evidence="1">Host cell membrane</location>
    </subcellularLocation>
    <text evidence="1">In infected cells, it is found in the membrane.</text>
</comment>
<comment type="similarity">
    <text evidence="2">Belongs to the delta-lysin family.</text>
</comment>
<comment type="sequence caution" evidence="2">
    <conflict type="erroneous initiation">
        <sequence resource="EMBL-CDS" id="CAG41103"/>
    </conflict>
</comment>
<protein>
    <recommendedName>
        <fullName>Delta-hemolysin</fullName>
        <shortName>Delta-lysin</shortName>
    </recommendedName>
    <alternativeName>
        <fullName>Delta-toxin</fullName>
    </alternativeName>
</protein>
<sequence length="26" mass="2979">MAQDIISTIGDLVKWIIDTVNKFTKK</sequence>
<feature type="peptide" id="PRO_0000035642" description="Delta-hemolysin">
    <location>
        <begin position="1"/>
        <end position="26"/>
    </location>
</feature>
<feature type="modified residue" description="N-formylmethionine" evidence="1">
    <location>
        <position position="1"/>
    </location>
</feature>
<organism>
    <name type="scientific">Staphylococcus aureus (strain MRSA252)</name>
    <dbReference type="NCBI Taxonomy" id="282458"/>
    <lineage>
        <taxon>Bacteria</taxon>
        <taxon>Bacillati</taxon>
        <taxon>Bacillota</taxon>
        <taxon>Bacilli</taxon>
        <taxon>Bacillales</taxon>
        <taxon>Staphylococcaceae</taxon>
        <taxon>Staphylococcus</taxon>
    </lineage>
</organism>
<keyword id="KW-0204">Cytolysis</keyword>
<keyword id="KW-0291">Formylation</keyword>
<keyword id="KW-0354">Hemolysis</keyword>
<keyword id="KW-1032">Host cell membrane</keyword>
<keyword id="KW-1043">Host membrane</keyword>
<keyword id="KW-0472">Membrane</keyword>
<keyword id="KW-0964">Secreted</keyword>
<keyword id="KW-0800">Toxin</keyword>
<keyword id="KW-0812">Transmembrane</keyword>
<keyword id="KW-0843">Virulence</keyword>
<accession>Q6GF37</accession>
<proteinExistence type="inferred from homology"/>
<dbReference type="EMBL" id="BX571856">
    <property type="protein sequence ID" value="CAG41103.1"/>
    <property type="status" value="ALT_INIT"/>
    <property type="molecule type" value="Genomic_DNA"/>
</dbReference>
<dbReference type="SMR" id="Q6GF37"/>
<dbReference type="KEGG" id="sar:SAR2122"/>
<dbReference type="HOGENOM" id="CLU_3222291_0_0_9"/>
<dbReference type="Proteomes" id="UP000000596">
    <property type="component" value="Chromosome"/>
</dbReference>
<dbReference type="GO" id="GO:0005576">
    <property type="term" value="C:extracellular region"/>
    <property type="evidence" value="ECO:0007669"/>
    <property type="project" value="UniProtKB-SubCell"/>
</dbReference>
<dbReference type="GO" id="GO:0020002">
    <property type="term" value="C:host cell plasma membrane"/>
    <property type="evidence" value="ECO:0007669"/>
    <property type="project" value="UniProtKB-SubCell"/>
</dbReference>
<dbReference type="GO" id="GO:0016020">
    <property type="term" value="C:membrane"/>
    <property type="evidence" value="ECO:0007669"/>
    <property type="project" value="UniProtKB-KW"/>
</dbReference>
<dbReference type="GO" id="GO:0090729">
    <property type="term" value="F:toxin activity"/>
    <property type="evidence" value="ECO:0007669"/>
    <property type="project" value="UniProtKB-KW"/>
</dbReference>
<dbReference type="GO" id="GO:0019836">
    <property type="term" value="P:symbiont-mediated hemolysis of host erythrocyte"/>
    <property type="evidence" value="ECO:0007669"/>
    <property type="project" value="InterPro"/>
</dbReference>
<dbReference type="InterPro" id="IPR008034">
    <property type="entry name" value="Delta_lysin"/>
</dbReference>
<dbReference type="NCBIfam" id="NF011336">
    <property type="entry name" value="PRK14752.1-1"/>
    <property type="match status" value="1"/>
</dbReference>
<dbReference type="NCBIfam" id="NF011338">
    <property type="entry name" value="PRK14752.1-4"/>
    <property type="match status" value="1"/>
</dbReference>
<dbReference type="Pfam" id="PF05372">
    <property type="entry name" value="Delta_lysin"/>
    <property type="match status" value="1"/>
</dbReference>
<reference key="1">
    <citation type="journal article" date="2004" name="Proc. Natl. Acad. Sci. U.S.A.">
        <title>Complete genomes of two clinical Staphylococcus aureus strains: evidence for the rapid evolution of virulence and drug resistance.</title>
        <authorList>
            <person name="Holden M.T.G."/>
            <person name="Feil E.J."/>
            <person name="Lindsay J.A."/>
            <person name="Peacock S.J."/>
            <person name="Day N.P.J."/>
            <person name="Enright M.C."/>
            <person name="Foster T.J."/>
            <person name="Moore C.E."/>
            <person name="Hurst L."/>
            <person name="Atkin R."/>
            <person name="Barron A."/>
            <person name="Bason N."/>
            <person name="Bentley S.D."/>
            <person name="Chillingworth C."/>
            <person name="Chillingworth T."/>
            <person name="Churcher C."/>
            <person name="Clark L."/>
            <person name="Corton C."/>
            <person name="Cronin A."/>
            <person name="Doggett J."/>
            <person name="Dowd L."/>
            <person name="Feltwell T."/>
            <person name="Hance Z."/>
            <person name="Harris B."/>
            <person name="Hauser H."/>
            <person name="Holroyd S."/>
            <person name="Jagels K."/>
            <person name="James K.D."/>
            <person name="Lennard N."/>
            <person name="Line A."/>
            <person name="Mayes R."/>
            <person name="Moule S."/>
            <person name="Mungall K."/>
            <person name="Ormond D."/>
            <person name="Quail M.A."/>
            <person name="Rabbinowitsch E."/>
            <person name="Rutherford K.M."/>
            <person name="Sanders M."/>
            <person name="Sharp S."/>
            <person name="Simmonds M."/>
            <person name="Stevens K."/>
            <person name="Whitehead S."/>
            <person name="Barrell B.G."/>
            <person name="Spratt B.G."/>
            <person name="Parkhill J."/>
        </authorList>
    </citation>
    <scope>NUCLEOTIDE SEQUENCE [LARGE SCALE GENOMIC DNA]</scope>
    <source>
        <strain>MRSA252</strain>
    </source>
</reference>